<protein>
    <recommendedName>
        <fullName evidence="1">Protein-glutamate methylesterase/protein-glutamine glutaminase</fullName>
        <ecNumber evidence="1">3.1.1.61</ecNumber>
        <ecNumber evidence="1">3.5.1.44</ecNumber>
    </recommendedName>
</protein>
<comment type="function">
    <text evidence="1">Involved in chemotaxis. Part of a chemotaxis signal transduction system that modulates chemotaxis in response to various stimuli. Catalyzes the demethylation of specific methylglutamate residues introduced into the chemoreceptors (methyl-accepting chemotaxis proteins or MCP) by CheR. Also mediates the irreversible deamidation of specific glutamine residues to glutamic acid.</text>
</comment>
<comment type="catalytic activity">
    <reaction evidence="1">
        <text>[protein]-L-glutamate 5-O-methyl ester + H2O = L-glutamyl-[protein] + methanol + H(+)</text>
        <dbReference type="Rhea" id="RHEA:23236"/>
        <dbReference type="Rhea" id="RHEA-COMP:10208"/>
        <dbReference type="Rhea" id="RHEA-COMP:10311"/>
        <dbReference type="ChEBI" id="CHEBI:15377"/>
        <dbReference type="ChEBI" id="CHEBI:15378"/>
        <dbReference type="ChEBI" id="CHEBI:17790"/>
        <dbReference type="ChEBI" id="CHEBI:29973"/>
        <dbReference type="ChEBI" id="CHEBI:82795"/>
        <dbReference type="EC" id="3.1.1.61"/>
    </reaction>
</comment>
<comment type="catalytic activity">
    <reaction evidence="1">
        <text>L-glutaminyl-[protein] + H2O = L-glutamyl-[protein] + NH4(+)</text>
        <dbReference type="Rhea" id="RHEA:16441"/>
        <dbReference type="Rhea" id="RHEA-COMP:10207"/>
        <dbReference type="Rhea" id="RHEA-COMP:10208"/>
        <dbReference type="ChEBI" id="CHEBI:15377"/>
        <dbReference type="ChEBI" id="CHEBI:28938"/>
        <dbReference type="ChEBI" id="CHEBI:29973"/>
        <dbReference type="ChEBI" id="CHEBI:30011"/>
        <dbReference type="EC" id="3.5.1.44"/>
    </reaction>
</comment>
<comment type="subcellular location">
    <subcellularLocation>
        <location evidence="1">Cytoplasm</location>
    </subcellularLocation>
</comment>
<comment type="domain">
    <text evidence="1">Contains a C-terminal catalytic domain, and an N-terminal region which modulates catalytic activity.</text>
</comment>
<comment type="PTM">
    <text evidence="1">Phosphorylated by CheA. Phosphorylation of the N-terminal regulatory domain activates the methylesterase activity.</text>
</comment>
<comment type="similarity">
    <text evidence="1">Belongs to the CheB family.</text>
</comment>
<evidence type="ECO:0000255" key="1">
    <source>
        <dbReference type="HAMAP-Rule" id="MF_00099"/>
    </source>
</evidence>
<dbReference type="EC" id="3.1.1.61" evidence="1"/>
<dbReference type="EC" id="3.5.1.44" evidence="1"/>
<dbReference type="EMBL" id="CP000036">
    <property type="protein sequence ID" value="ABB65756.1"/>
    <property type="molecule type" value="Genomic_DNA"/>
</dbReference>
<dbReference type="RefSeq" id="WP_000036377.1">
    <property type="nucleotide sequence ID" value="NC_007613.1"/>
</dbReference>
<dbReference type="SMR" id="Q322K2"/>
<dbReference type="KEGG" id="sbo:SBO_1117"/>
<dbReference type="HOGENOM" id="CLU_000445_51_0_6"/>
<dbReference type="Proteomes" id="UP000007067">
    <property type="component" value="Chromosome"/>
</dbReference>
<dbReference type="GO" id="GO:0005737">
    <property type="term" value="C:cytoplasm"/>
    <property type="evidence" value="ECO:0007669"/>
    <property type="project" value="UniProtKB-SubCell"/>
</dbReference>
<dbReference type="GO" id="GO:0000156">
    <property type="term" value="F:phosphorelay response regulator activity"/>
    <property type="evidence" value="ECO:0007669"/>
    <property type="project" value="InterPro"/>
</dbReference>
<dbReference type="GO" id="GO:0008984">
    <property type="term" value="F:protein-glutamate methylesterase activity"/>
    <property type="evidence" value="ECO:0007669"/>
    <property type="project" value="UniProtKB-UniRule"/>
</dbReference>
<dbReference type="GO" id="GO:0050568">
    <property type="term" value="F:protein-glutamine glutaminase activity"/>
    <property type="evidence" value="ECO:0007669"/>
    <property type="project" value="UniProtKB-UniRule"/>
</dbReference>
<dbReference type="GO" id="GO:0006935">
    <property type="term" value="P:chemotaxis"/>
    <property type="evidence" value="ECO:0007669"/>
    <property type="project" value="UniProtKB-UniRule"/>
</dbReference>
<dbReference type="CDD" id="cd17541">
    <property type="entry name" value="REC_CheB-like"/>
    <property type="match status" value="1"/>
</dbReference>
<dbReference type="FunFam" id="3.40.50.2300:FF:000060">
    <property type="entry name" value="Protein-glutamate methylesterase/protein-glutamine glutaminase"/>
    <property type="match status" value="1"/>
</dbReference>
<dbReference type="Gene3D" id="3.40.50.2300">
    <property type="match status" value="1"/>
</dbReference>
<dbReference type="Gene3D" id="3.40.50.180">
    <property type="entry name" value="Methylesterase CheB, C-terminal domain"/>
    <property type="match status" value="2"/>
</dbReference>
<dbReference type="HAMAP" id="MF_00099">
    <property type="entry name" value="CheB_chemtxs"/>
    <property type="match status" value="1"/>
</dbReference>
<dbReference type="InterPro" id="IPR008248">
    <property type="entry name" value="CheB-like"/>
</dbReference>
<dbReference type="InterPro" id="IPR035909">
    <property type="entry name" value="CheB_C"/>
</dbReference>
<dbReference type="InterPro" id="IPR011006">
    <property type="entry name" value="CheY-like_superfamily"/>
</dbReference>
<dbReference type="InterPro" id="IPR000673">
    <property type="entry name" value="Sig_transdc_resp-reg_Me-estase"/>
</dbReference>
<dbReference type="InterPro" id="IPR001789">
    <property type="entry name" value="Sig_transdc_resp-reg_receiver"/>
</dbReference>
<dbReference type="NCBIfam" id="NF001965">
    <property type="entry name" value="PRK00742.1"/>
    <property type="match status" value="1"/>
</dbReference>
<dbReference type="PANTHER" id="PTHR42872">
    <property type="entry name" value="PROTEIN-GLUTAMATE METHYLESTERASE/PROTEIN-GLUTAMINE GLUTAMINASE"/>
    <property type="match status" value="1"/>
</dbReference>
<dbReference type="PANTHER" id="PTHR42872:SF6">
    <property type="entry name" value="PROTEIN-GLUTAMATE METHYLESTERASE_PROTEIN-GLUTAMINE GLUTAMINASE"/>
    <property type="match status" value="1"/>
</dbReference>
<dbReference type="Pfam" id="PF01339">
    <property type="entry name" value="CheB_methylest"/>
    <property type="match status" value="2"/>
</dbReference>
<dbReference type="Pfam" id="PF00072">
    <property type="entry name" value="Response_reg"/>
    <property type="match status" value="1"/>
</dbReference>
<dbReference type="PIRSF" id="PIRSF000876">
    <property type="entry name" value="RR_chemtxs_CheB"/>
    <property type="match status" value="1"/>
</dbReference>
<dbReference type="SMART" id="SM00448">
    <property type="entry name" value="REC"/>
    <property type="match status" value="1"/>
</dbReference>
<dbReference type="SUPFAM" id="SSF52172">
    <property type="entry name" value="CheY-like"/>
    <property type="match status" value="1"/>
</dbReference>
<dbReference type="SUPFAM" id="SSF52738">
    <property type="entry name" value="Methylesterase CheB, C-terminal domain"/>
    <property type="match status" value="1"/>
</dbReference>
<dbReference type="PROSITE" id="PS50122">
    <property type="entry name" value="CHEB"/>
    <property type="match status" value="1"/>
</dbReference>
<dbReference type="PROSITE" id="PS50110">
    <property type="entry name" value="RESPONSE_REGULATORY"/>
    <property type="match status" value="1"/>
</dbReference>
<reference key="1">
    <citation type="journal article" date="2005" name="Nucleic Acids Res.">
        <title>Genome dynamics and diversity of Shigella species, the etiologic agents of bacillary dysentery.</title>
        <authorList>
            <person name="Yang F."/>
            <person name="Yang J."/>
            <person name="Zhang X."/>
            <person name="Chen L."/>
            <person name="Jiang Y."/>
            <person name="Yan Y."/>
            <person name="Tang X."/>
            <person name="Wang J."/>
            <person name="Xiong Z."/>
            <person name="Dong J."/>
            <person name="Xue Y."/>
            <person name="Zhu Y."/>
            <person name="Xu X."/>
            <person name="Sun L."/>
            <person name="Chen S."/>
            <person name="Nie H."/>
            <person name="Peng J."/>
            <person name="Xu J."/>
            <person name="Wang Y."/>
            <person name="Yuan Z."/>
            <person name="Wen Y."/>
            <person name="Yao Z."/>
            <person name="Shen Y."/>
            <person name="Qiang B."/>
            <person name="Hou Y."/>
            <person name="Yu J."/>
            <person name="Jin Q."/>
        </authorList>
    </citation>
    <scope>NUCLEOTIDE SEQUENCE [LARGE SCALE GENOMIC DNA]</scope>
    <source>
        <strain>Sb227</strain>
    </source>
</reference>
<keyword id="KW-0145">Chemotaxis</keyword>
<keyword id="KW-0963">Cytoplasm</keyword>
<keyword id="KW-0378">Hydrolase</keyword>
<keyword id="KW-0597">Phosphoprotein</keyword>
<name>CHEB_SHIBS</name>
<proteinExistence type="inferred from homology"/>
<accession>Q322K2</accession>
<organism>
    <name type="scientific">Shigella boydii serotype 4 (strain Sb227)</name>
    <dbReference type="NCBI Taxonomy" id="300268"/>
    <lineage>
        <taxon>Bacteria</taxon>
        <taxon>Pseudomonadati</taxon>
        <taxon>Pseudomonadota</taxon>
        <taxon>Gammaproteobacteria</taxon>
        <taxon>Enterobacterales</taxon>
        <taxon>Enterobacteriaceae</taxon>
        <taxon>Shigella</taxon>
    </lineage>
</organism>
<gene>
    <name evidence="1" type="primary">cheB</name>
    <name type="ordered locus">SBO_1117</name>
</gene>
<sequence>MSKIRVLSVDDSALMRQIMTEIINSHSDMEMVATAPDPLVARDLIKKFNPDVLTLDVEMPRMDGLDFLEKLMRLRPMPVVMVSSLTGKGSEVTLRALELGAIDFVTKPQLGIREGMLAYSEMIAEKVRTAAKASLAAHKPLSAPTTLKAGPLLSSEKLIAIGASTGGTEAIRHVLQPLPLSSPALLITQHMPPGFTRSFADRLNKLCQIGVKEAEDGERVLPGHAYIAPGDRHMELARSGANYQIKIHDGPVGMLAMRQAGAWTLAQNEASCVVFGMPREAINMGGVCEVVDLSQVSQQMLAKISAGQAIRI</sequence>
<feature type="chain" id="PRO_0000225485" description="Protein-glutamate methylesterase/protein-glutamine glutaminase">
    <location>
        <begin position="1"/>
        <end position="312"/>
    </location>
</feature>
<feature type="domain" description="Response regulatory" evidence="1">
    <location>
        <begin position="5"/>
        <end position="122"/>
    </location>
</feature>
<feature type="domain" description="CheB-type methylesterase" evidence="1">
    <location>
        <begin position="152"/>
        <end position="307"/>
    </location>
</feature>
<feature type="active site" evidence="1">
    <location>
        <position position="164"/>
    </location>
</feature>
<feature type="active site" evidence="1">
    <location>
        <position position="190"/>
    </location>
</feature>
<feature type="active site" evidence="1">
    <location>
        <position position="249"/>
    </location>
</feature>
<feature type="modified residue" description="4-aspartylphosphate" evidence="1">
    <location>
        <position position="56"/>
    </location>
</feature>